<dbReference type="EMBL" id="AE000520">
    <property type="protein sequence ID" value="AAC65174.1"/>
    <property type="molecule type" value="Genomic_DNA"/>
</dbReference>
<dbReference type="PIR" id="G71354">
    <property type="entry name" value="G71354"/>
</dbReference>
<dbReference type="RefSeq" id="WP_010881636.1">
    <property type="nucleotide sequence ID" value="NC_021490.2"/>
</dbReference>
<dbReference type="SMR" id="O83219"/>
<dbReference type="STRING" id="243276.TP_0189"/>
<dbReference type="EnsemblBacteria" id="AAC65174">
    <property type="protein sequence ID" value="AAC65174"/>
    <property type="gene ID" value="TP_0189"/>
</dbReference>
<dbReference type="GeneID" id="93875977"/>
<dbReference type="KEGG" id="tpa:TP_0189"/>
<dbReference type="KEGG" id="tpw:TPANIC_0189"/>
<dbReference type="eggNOG" id="COG0087">
    <property type="taxonomic scope" value="Bacteria"/>
</dbReference>
<dbReference type="HOGENOM" id="CLU_044142_4_1_12"/>
<dbReference type="OrthoDB" id="9806135at2"/>
<dbReference type="Proteomes" id="UP000000811">
    <property type="component" value="Chromosome"/>
</dbReference>
<dbReference type="GO" id="GO:0022625">
    <property type="term" value="C:cytosolic large ribosomal subunit"/>
    <property type="evidence" value="ECO:0007669"/>
    <property type="project" value="TreeGrafter"/>
</dbReference>
<dbReference type="GO" id="GO:0019843">
    <property type="term" value="F:rRNA binding"/>
    <property type="evidence" value="ECO:0007669"/>
    <property type="project" value="UniProtKB-UniRule"/>
</dbReference>
<dbReference type="GO" id="GO:0003735">
    <property type="term" value="F:structural constituent of ribosome"/>
    <property type="evidence" value="ECO:0007669"/>
    <property type="project" value="InterPro"/>
</dbReference>
<dbReference type="GO" id="GO:0006412">
    <property type="term" value="P:translation"/>
    <property type="evidence" value="ECO:0007669"/>
    <property type="project" value="UniProtKB-UniRule"/>
</dbReference>
<dbReference type="FunFam" id="2.40.30.10:FF:000004">
    <property type="entry name" value="50S ribosomal protein L3"/>
    <property type="match status" value="1"/>
</dbReference>
<dbReference type="Gene3D" id="3.30.160.810">
    <property type="match status" value="1"/>
</dbReference>
<dbReference type="Gene3D" id="2.40.30.10">
    <property type="entry name" value="Translation factors"/>
    <property type="match status" value="1"/>
</dbReference>
<dbReference type="HAMAP" id="MF_01325_B">
    <property type="entry name" value="Ribosomal_uL3_B"/>
    <property type="match status" value="1"/>
</dbReference>
<dbReference type="InterPro" id="IPR000597">
    <property type="entry name" value="Ribosomal_uL3"/>
</dbReference>
<dbReference type="InterPro" id="IPR019927">
    <property type="entry name" value="Ribosomal_uL3_bac/org-type"/>
</dbReference>
<dbReference type="InterPro" id="IPR019926">
    <property type="entry name" value="Ribosomal_uL3_CS"/>
</dbReference>
<dbReference type="InterPro" id="IPR009000">
    <property type="entry name" value="Transl_B-barrel_sf"/>
</dbReference>
<dbReference type="NCBIfam" id="TIGR03625">
    <property type="entry name" value="L3_bact"/>
    <property type="match status" value="1"/>
</dbReference>
<dbReference type="PANTHER" id="PTHR11229">
    <property type="entry name" value="50S RIBOSOMAL PROTEIN L3"/>
    <property type="match status" value="1"/>
</dbReference>
<dbReference type="PANTHER" id="PTHR11229:SF16">
    <property type="entry name" value="LARGE RIBOSOMAL SUBUNIT PROTEIN UL3C"/>
    <property type="match status" value="1"/>
</dbReference>
<dbReference type="Pfam" id="PF00297">
    <property type="entry name" value="Ribosomal_L3"/>
    <property type="match status" value="1"/>
</dbReference>
<dbReference type="SUPFAM" id="SSF50447">
    <property type="entry name" value="Translation proteins"/>
    <property type="match status" value="1"/>
</dbReference>
<dbReference type="PROSITE" id="PS00474">
    <property type="entry name" value="RIBOSOMAL_L3"/>
    <property type="match status" value="1"/>
</dbReference>
<comment type="function">
    <text evidence="1">One of the primary rRNA binding proteins, it binds directly near the 3'-end of the 23S rRNA, where it nucleates assembly of the 50S subunit.</text>
</comment>
<comment type="subunit">
    <text evidence="1">Part of the 50S ribosomal subunit. Forms a cluster with proteins L14 and L19.</text>
</comment>
<comment type="similarity">
    <text evidence="1">Belongs to the universal ribosomal protein uL3 family.</text>
</comment>
<sequence length="208" mass="22783">MVGLIGQKVGMTQIFDARGCVTPVTVIRVEHNVVVGLKDVERFGYSAVILGTGCMKKSRISKPYAGQFAERIPPVRVMREFRGFTLDVSVGQVLDVRVLESVRYLDVCALSKGKGFQGVVKRWGFSGGRSSHGSKFHREAGSTGQCTSPGRTFKNVKMPGRMGAERVTVQNLRIERIDVGLGVVMVRGAVPGRNKATVFLRTAVKRER</sequence>
<organism>
    <name type="scientific">Treponema pallidum (strain Nichols)</name>
    <dbReference type="NCBI Taxonomy" id="243276"/>
    <lineage>
        <taxon>Bacteria</taxon>
        <taxon>Pseudomonadati</taxon>
        <taxon>Spirochaetota</taxon>
        <taxon>Spirochaetia</taxon>
        <taxon>Spirochaetales</taxon>
        <taxon>Treponemataceae</taxon>
        <taxon>Treponema</taxon>
    </lineage>
</organism>
<reference key="1">
    <citation type="journal article" date="1998" name="Science">
        <title>Complete genome sequence of Treponema pallidum, the syphilis spirochete.</title>
        <authorList>
            <person name="Fraser C.M."/>
            <person name="Norris S.J."/>
            <person name="Weinstock G.M."/>
            <person name="White O."/>
            <person name="Sutton G.G."/>
            <person name="Dodson R.J."/>
            <person name="Gwinn M.L."/>
            <person name="Hickey E.K."/>
            <person name="Clayton R.A."/>
            <person name="Ketchum K.A."/>
            <person name="Sodergren E."/>
            <person name="Hardham J.M."/>
            <person name="McLeod M.P."/>
            <person name="Salzberg S.L."/>
            <person name="Peterson J.D."/>
            <person name="Khalak H.G."/>
            <person name="Richardson D.L."/>
            <person name="Howell J.K."/>
            <person name="Chidambaram M."/>
            <person name="Utterback T.R."/>
            <person name="McDonald L.A."/>
            <person name="Artiach P."/>
            <person name="Bowman C."/>
            <person name="Cotton M.D."/>
            <person name="Fujii C."/>
            <person name="Garland S.A."/>
            <person name="Hatch B."/>
            <person name="Horst K."/>
            <person name="Roberts K.M."/>
            <person name="Sandusky M."/>
            <person name="Weidman J.F."/>
            <person name="Smith H.O."/>
            <person name="Venter J.C."/>
        </authorList>
    </citation>
    <scope>NUCLEOTIDE SEQUENCE [LARGE SCALE GENOMIC DNA]</scope>
    <source>
        <strain>Nichols</strain>
    </source>
</reference>
<name>RL3_TREPA</name>
<feature type="chain" id="PRO_0000077182" description="Large ribosomal subunit protein uL3">
    <location>
        <begin position="1"/>
        <end position="208"/>
    </location>
</feature>
<feature type="region of interest" description="Disordered" evidence="2">
    <location>
        <begin position="134"/>
        <end position="153"/>
    </location>
</feature>
<protein>
    <recommendedName>
        <fullName evidence="1">Large ribosomal subunit protein uL3</fullName>
    </recommendedName>
    <alternativeName>
        <fullName evidence="3">50S ribosomal protein L3</fullName>
    </alternativeName>
</protein>
<evidence type="ECO:0000255" key="1">
    <source>
        <dbReference type="HAMAP-Rule" id="MF_01325"/>
    </source>
</evidence>
<evidence type="ECO:0000256" key="2">
    <source>
        <dbReference type="SAM" id="MobiDB-lite"/>
    </source>
</evidence>
<evidence type="ECO:0000305" key="3"/>
<gene>
    <name evidence="1" type="primary">rplC</name>
    <name type="ordered locus">TP_0189</name>
</gene>
<accession>O83219</accession>
<keyword id="KW-1185">Reference proteome</keyword>
<keyword id="KW-0687">Ribonucleoprotein</keyword>
<keyword id="KW-0689">Ribosomal protein</keyword>
<keyword id="KW-0694">RNA-binding</keyword>
<keyword id="KW-0699">rRNA-binding</keyword>
<proteinExistence type="inferred from homology"/>